<gene>
    <name evidence="1" type="primary">serS</name>
    <name type="ordered locus">TTE0025</name>
</gene>
<name>SYS_CALS4</name>
<comment type="function">
    <text evidence="1">Catalyzes the attachment of serine to tRNA(Ser). Is also able to aminoacylate tRNA(Sec) with serine, to form the misacylated tRNA L-seryl-tRNA(Sec), which will be further converted into selenocysteinyl-tRNA(Sec).</text>
</comment>
<comment type="catalytic activity">
    <reaction evidence="1">
        <text>tRNA(Ser) + L-serine + ATP = L-seryl-tRNA(Ser) + AMP + diphosphate + H(+)</text>
        <dbReference type="Rhea" id="RHEA:12292"/>
        <dbReference type="Rhea" id="RHEA-COMP:9669"/>
        <dbReference type="Rhea" id="RHEA-COMP:9703"/>
        <dbReference type="ChEBI" id="CHEBI:15378"/>
        <dbReference type="ChEBI" id="CHEBI:30616"/>
        <dbReference type="ChEBI" id="CHEBI:33019"/>
        <dbReference type="ChEBI" id="CHEBI:33384"/>
        <dbReference type="ChEBI" id="CHEBI:78442"/>
        <dbReference type="ChEBI" id="CHEBI:78533"/>
        <dbReference type="ChEBI" id="CHEBI:456215"/>
        <dbReference type="EC" id="6.1.1.11"/>
    </reaction>
</comment>
<comment type="catalytic activity">
    <reaction evidence="1">
        <text>tRNA(Sec) + L-serine + ATP = L-seryl-tRNA(Sec) + AMP + diphosphate + H(+)</text>
        <dbReference type="Rhea" id="RHEA:42580"/>
        <dbReference type="Rhea" id="RHEA-COMP:9742"/>
        <dbReference type="Rhea" id="RHEA-COMP:10128"/>
        <dbReference type="ChEBI" id="CHEBI:15378"/>
        <dbReference type="ChEBI" id="CHEBI:30616"/>
        <dbReference type="ChEBI" id="CHEBI:33019"/>
        <dbReference type="ChEBI" id="CHEBI:33384"/>
        <dbReference type="ChEBI" id="CHEBI:78442"/>
        <dbReference type="ChEBI" id="CHEBI:78533"/>
        <dbReference type="ChEBI" id="CHEBI:456215"/>
        <dbReference type="EC" id="6.1.1.11"/>
    </reaction>
</comment>
<comment type="pathway">
    <text evidence="1">Aminoacyl-tRNA biosynthesis; selenocysteinyl-tRNA(Sec) biosynthesis; L-seryl-tRNA(Sec) from L-serine and tRNA(Sec): step 1/1.</text>
</comment>
<comment type="subunit">
    <text evidence="1">Homodimer. The tRNA molecule binds across the dimer.</text>
</comment>
<comment type="subcellular location">
    <subcellularLocation>
        <location evidence="1">Cytoplasm</location>
    </subcellularLocation>
</comment>
<comment type="domain">
    <text evidence="1">Consists of two distinct domains, a catalytic core and a N-terminal extension that is involved in tRNA binding.</text>
</comment>
<comment type="similarity">
    <text evidence="1">Belongs to the class-II aminoacyl-tRNA synthetase family. Type-1 seryl-tRNA synthetase subfamily.</text>
</comment>
<sequence>MLDIKFIRSNPDVVRRAIELKGEKADLDRLLLLDEKRREMLVELEALKNKRNTESDNIARLKREGKDASELIAKMKELSDKIKDMEQELREIEEEMEKILWTIPNIPHESVPIGESDEDNVEVRRWGEPRKFDFEPKPHWEIGEALGILDFEAASRVTGSRFVFYKGLGARLERALINFMLDLHIEKHGYKEVFPPFLVHRRSMFGTGQLPKFEEDAFKVEGTDYFLIPTAEVPVTNLYRETIIDGEQLPIYHCAYSACFRQEAGAAGRDTRGLIRQHQFDKVELVKFTEPDKSYEELEKMTRDAEEVLQALGLPYRVVAICTGDLGFTASKKYDIEVWMPSYGRYVEISSCSNCEDFQARRANIRYRPKGGGKLQYVHTLNGSGVAVGRTFAAILENYQQEDGSVVVPEVLRPYMKVDVIRKEE</sequence>
<reference key="1">
    <citation type="journal article" date="2002" name="Genome Res.">
        <title>A complete sequence of the T. tengcongensis genome.</title>
        <authorList>
            <person name="Bao Q."/>
            <person name="Tian Y."/>
            <person name="Li W."/>
            <person name="Xu Z."/>
            <person name="Xuan Z."/>
            <person name="Hu S."/>
            <person name="Dong W."/>
            <person name="Yang J."/>
            <person name="Chen Y."/>
            <person name="Xue Y."/>
            <person name="Xu Y."/>
            <person name="Lai X."/>
            <person name="Huang L."/>
            <person name="Dong X."/>
            <person name="Ma Y."/>
            <person name="Ling L."/>
            <person name="Tan H."/>
            <person name="Chen R."/>
            <person name="Wang J."/>
            <person name="Yu J."/>
            <person name="Yang H."/>
        </authorList>
    </citation>
    <scope>NUCLEOTIDE SEQUENCE [LARGE SCALE GENOMIC DNA]</scope>
    <source>
        <strain>DSM 15242 / JCM 11007 / NBRC 100824 / MB4</strain>
    </source>
</reference>
<feature type="chain" id="PRO_0000122147" description="Serine--tRNA ligase">
    <location>
        <begin position="1"/>
        <end position="425"/>
    </location>
</feature>
<feature type="binding site" evidence="1">
    <location>
        <begin position="230"/>
        <end position="232"/>
    </location>
    <ligand>
        <name>L-serine</name>
        <dbReference type="ChEBI" id="CHEBI:33384"/>
    </ligand>
</feature>
<feature type="binding site" evidence="1">
    <location>
        <begin position="261"/>
        <end position="263"/>
    </location>
    <ligand>
        <name>ATP</name>
        <dbReference type="ChEBI" id="CHEBI:30616"/>
    </ligand>
</feature>
<feature type="binding site" evidence="1">
    <location>
        <position position="284"/>
    </location>
    <ligand>
        <name>L-serine</name>
        <dbReference type="ChEBI" id="CHEBI:33384"/>
    </ligand>
</feature>
<feature type="binding site" evidence="1">
    <location>
        <begin position="348"/>
        <end position="351"/>
    </location>
    <ligand>
        <name>ATP</name>
        <dbReference type="ChEBI" id="CHEBI:30616"/>
    </ligand>
</feature>
<feature type="binding site" evidence="1">
    <location>
        <position position="384"/>
    </location>
    <ligand>
        <name>L-serine</name>
        <dbReference type="ChEBI" id="CHEBI:33384"/>
    </ligand>
</feature>
<evidence type="ECO:0000255" key="1">
    <source>
        <dbReference type="HAMAP-Rule" id="MF_00176"/>
    </source>
</evidence>
<dbReference type="EC" id="6.1.1.11" evidence="1"/>
<dbReference type="EMBL" id="AE008691">
    <property type="protein sequence ID" value="AAM23341.1"/>
    <property type="molecule type" value="Genomic_DNA"/>
</dbReference>
<dbReference type="RefSeq" id="WP_009609894.1">
    <property type="nucleotide sequence ID" value="NC_003869.1"/>
</dbReference>
<dbReference type="SMR" id="Q8RDJ5"/>
<dbReference type="STRING" id="273068.TTE0025"/>
<dbReference type="KEGG" id="tte:TTE0025"/>
<dbReference type="eggNOG" id="COG0172">
    <property type="taxonomic scope" value="Bacteria"/>
</dbReference>
<dbReference type="HOGENOM" id="CLU_023797_1_1_9"/>
<dbReference type="OrthoDB" id="9804647at2"/>
<dbReference type="UniPathway" id="UPA00906">
    <property type="reaction ID" value="UER00895"/>
</dbReference>
<dbReference type="Proteomes" id="UP000000555">
    <property type="component" value="Chromosome"/>
</dbReference>
<dbReference type="GO" id="GO:0005737">
    <property type="term" value="C:cytoplasm"/>
    <property type="evidence" value="ECO:0007669"/>
    <property type="project" value="UniProtKB-SubCell"/>
</dbReference>
<dbReference type="GO" id="GO:0005524">
    <property type="term" value="F:ATP binding"/>
    <property type="evidence" value="ECO:0007669"/>
    <property type="project" value="UniProtKB-UniRule"/>
</dbReference>
<dbReference type="GO" id="GO:0140096">
    <property type="term" value="F:catalytic activity, acting on a protein"/>
    <property type="evidence" value="ECO:0007669"/>
    <property type="project" value="UniProtKB-ARBA"/>
</dbReference>
<dbReference type="GO" id="GO:0004828">
    <property type="term" value="F:serine-tRNA ligase activity"/>
    <property type="evidence" value="ECO:0007669"/>
    <property type="project" value="UniProtKB-UniRule"/>
</dbReference>
<dbReference type="GO" id="GO:0016740">
    <property type="term" value="F:transferase activity"/>
    <property type="evidence" value="ECO:0007669"/>
    <property type="project" value="UniProtKB-ARBA"/>
</dbReference>
<dbReference type="GO" id="GO:0016260">
    <property type="term" value="P:selenocysteine biosynthetic process"/>
    <property type="evidence" value="ECO:0007669"/>
    <property type="project" value="UniProtKB-UniRule"/>
</dbReference>
<dbReference type="GO" id="GO:0006434">
    <property type="term" value="P:seryl-tRNA aminoacylation"/>
    <property type="evidence" value="ECO:0007669"/>
    <property type="project" value="UniProtKB-UniRule"/>
</dbReference>
<dbReference type="CDD" id="cd00770">
    <property type="entry name" value="SerRS_core"/>
    <property type="match status" value="1"/>
</dbReference>
<dbReference type="Gene3D" id="3.30.930.10">
    <property type="entry name" value="Bira Bifunctional Protein, Domain 2"/>
    <property type="match status" value="1"/>
</dbReference>
<dbReference type="Gene3D" id="1.10.287.40">
    <property type="entry name" value="Serine-tRNA synthetase, tRNA binding domain"/>
    <property type="match status" value="1"/>
</dbReference>
<dbReference type="HAMAP" id="MF_00176">
    <property type="entry name" value="Ser_tRNA_synth_type1"/>
    <property type="match status" value="1"/>
</dbReference>
<dbReference type="InterPro" id="IPR002314">
    <property type="entry name" value="aa-tRNA-synt_IIb"/>
</dbReference>
<dbReference type="InterPro" id="IPR006195">
    <property type="entry name" value="aa-tRNA-synth_II"/>
</dbReference>
<dbReference type="InterPro" id="IPR045864">
    <property type="entry name" value="aa-tRNA-synth_II/BPL/LPL"/>
</dbReference>
<dbReference type="InterPro" id="IPR002317">
    <property type="entry name" value="Ser-tRNA-ligase_type_1"/>
</dbReference>
<dbReference type="InterPro" id="IPR015866">
    <property type="entry name" value="Ser-tRNA-synth_1_N"/>
</dbReference>
<dbReference type="InterPro" id="IPR042103">
    <property type="entry name" value="SerRS_1_N_sf"/>
</dbReference>
<dbReference type="InterPro" id="IPR033729">
    <property type="entry name" value="SerRS_core"/>
</dbReference>
<dbReference type="InterPro" id="IPR010978">
    <property type="entry name" value="tRNA-bd_arm"/>
</dbReference>
<dbReference type="NCBIfam" id="TIGR00414">
    <property type="entry name" value="serS"/>
    <property type="match status" value="1"/>
</dbReference>
<dbReference type="PANTHER" id="PTHR43697:SF1">
    <property type="entry name" value="SERINE--TRNA LIGASE"/>
    <property type="match status" value="1"/>
</dbReference>
<dbReference type="PANTHER" id="PTHR43697">
    <property type="entry name" value="SERYL-TRNA SYNTHETASE"/>
    <property type="match status" value="1"/>
</dbReference>
<dbReference type="Pfam" id="PF02403">
    <property type="entry name" value="Seryl_tRNA_N"/>
    <property type="match status" value="1"/>
</dbReference>
<dbReference type="Pfam" id="PF00587">
    <property type="entry name" value="tRNA-synt_2b"/>
    <property type="match status" value="1"/>
</dbReference>
<dbReference type="PIRSF" id="PIRSF001529">
    <property type="entry name" value="Ser-tRNA-synth_IIa"/>
    <property type="match status" value="1"/>
</dbReference>
<dbReference type="PRINTS" id="PR00981">
    <property type="entry name" value="TRNASYNTHSER"/>
</dbReference>
<dbReference type="SUPFAM" id="SSF55681">
    <property type="entry name" value="Class II aaRS and biotin synthetases"/>
    <property type="match status" value="1"/>
</dbReference>
<dbReference type="SUPFAM" id="SSF46589">
    <property type="entry name" value="tRNA-binding arm"/>
    <property type="match status" value="1"/>
</dbReference>
<dbReference type="PROSITE" id="PS50862">
    <property type="entry name" value="AA_TRNA_LIGASE_II"/>
    <property type="match status" value="1"/>
</dbReference>
<accession>Q8RDJ5</accession>
<keyword id="KW-0030">Aminoacyl-tRNA synthetase</keyword>
<keyword id="KW-0067">ATP-binding</keyword>
<keyword id="KW-0963">Cytoplasm</keyword>
<keyword id="KW-0436">Ligase</keyword>
<keyword id="KW-0547">Nucleotide-binding</keyword>
<keyword id="KW-0648">Protein biosynthesis</keyword>
<keyword id="KW-1185">Reference proteome</keyword>
<protein>
    <recommendedName>
        <fullName evidence="1">Serine--tRNA ligase</fullName>
        <ecNumber evidence="1">6.1.1.11</ecNumber>
    </recommendedName>
    <alternativeName>
        <fullName evidence="1">Seryl-tRNA synthetase</fullName>
        <shortName evidence="1">SerRS</shortName>
    </alternativeName>
    <alternativeName>
        <fullName evidence="1">Seryl-tRNA(Ser/Sec) synthetase</fullName>
    </alternativeName>
</protein>
<proteinExistence type="inferred from homology"/>
<organism>
    <name type="scientific">Caldanaerobacter subterraneus subsp. tengcongensis (strain DSM 15242 / JCM 11007 / NBRC 100824 / MB4)</name>
    <name type="common">Thermoanaerobacter tengcongensis</name>
    <dbReference type="NCBI Taxonomy" id="273068"/>
    <lineage>
        <taxon>Bacteria</taxon>
        <taxon>Bacillati</taxon>
        <taxon>Bacillota</taxon>
        <taxon>Clostridia</taxon>
        <taxon>Thermoanaerobacterales</taxon>
        <taxon>Thermoanaerobacteraceae</taxon>
        <taxon>Caldanaerobacter</taxon>
    </lineage>
</organism>